<organism>
    <name type="scientific">Methanococcus maripaludis (strain DSM 14266 / JCM 13030 / NBRC 101832 / S2 / LL)</name>
    <dbReference type="NCBI Taxonomy" id="267377"/>
    <lineage>
        <taxon>Archaea</taxon>
        <taxon>Methanobacteriati</taxon>
        <taxon>Methanobacteriota</taxon>
        <taxon>Methanomada group</taxon>
        <taxon>Methanococci</taxon>
        <taxon>Methanococcales</taxon>
        <taxon>Methanococcaceae</taxon>
        <taxon>Methanococcus</taxon>
    </lineage>
</organism>
<dbReference type="EC" id="2.7.7.1" evidence="1"/>
<dbReference type="EMBL" id="BX950229">
    <property type="protein sequence ID" value="CAF31134.1"/>
    <property type="molecule type" value="Genomic_DNA"/>
</dbReference>
<dbReference type="RefSeq" id="WP_011171522.1">
    <property type="nucleotide sequence ID" value="NC_005791.1"/>
</dbReference>
<dbReference type="SMR" id="Q6LWX6"/>
<dbReference type="STRING" id="267377.MMP1578"/>
<dbReference type="EnsemblBacteria" id="CAF31134">
    <property type="protein sequence ID" value="CAF31134"/>
    <property type="gene ID" value="MMP1578"/>
</dbReference>
<dbReference type="KEGG" id="mmp:MMP1578"/>
<dbReference type="PATRIC" id="fig|267377.15.peg.1616"/>
<dbReference type="eggNOG" id="arCOG00972">
    <property type="taxonomic scope" value="Archaea"/>
</dbReference>
<dbReference type="HOGENOM" id="CLU_108783_0_0_2"/>
<dbReference type="OrthoDB" id="264480at2157"/>
<dbReference type="UniPathway" id="UPA00253">
    <property type="reaction ID" value="UER00600"/>
</dbReference>
<dbReference type="Proteomes" id="UP000000590">
    <property type="component" value="Chromosome"/>
</dbReference>
<dbReference type="GO" id="GO:0005737">
    <property type="term" value="C:cytoplasm"/>
    <property type="evidence" value="ECO:0007669"/>
    <property type="project" value="UniProtKB-SubCell"/>
</dbReference>
<dbReference type="GO" id="GO:0005524">
    <property type="term" value="F:ATP binding"/>
    <property type="evidence" value="ECO:0007669"/>
    <property type="project" value="UniProtKB-KW"/>
</dbReference>
<dbReference type="GO" id="GO:0000309">
    <property type="term" value="F:nicotinamide-nucleotide adenylyltransferase activity"/>
    <property type="evidence" value="ECO:0007669"/>
    <property type="project" value="UniProtKB-UniRule"/>
</dbReference>
<dbReference type="GO" id="GO:0009435">
    <property type="term" value="P:NAD biosynthetic process"/>
    <property type="evidence" value="ECO:0007669"/>
    <property type="project" value="UniProtKB-UniRule"/>
</dbReference>
<dbReference type="Gene3D" id="3.40.50.620">
    <property type="entry name" value="HUPs"/>
    <property type="match status" value="1"/>
</dbReference>
<dbReference type="HAMAP" id="MF_00243">
    <property type="entry name" value="NMN_adenylyltr"/>
    <property type="match status" value="1"/>
</dbReference>
<dbReference type="InterPro" id="IPR004821">
    <property type="entry name" value="Cyt_trans-like"/>
</dbReference>
<dbReference type="InterPro" id="IPR006418">
    <property type="entry name" value="NMN_Atrans_arc"/>
</dbReference>
<dbReference type="InterPro" id="IPR014729">
    <property type="entry name" value="Rossmann-like_a/b/a_fold"/>
</dbReference>
<dbReference type="NCBIfam" id="TIGR01527">
    <property type="entry name" value="arch_NMN_Atrans"/>
    <property type="match status" value="1"/>
</dbReference>
<dbReference type="NCBIfam" id="TIGR00125">
    <property type="entry name" value="cyt_tran_rel"/>
    <property type="match status" value="1"/>
</dbReference>
<dbReference type="NCBIfam" id="NF002243">
    <property type="entry name" value="PRK01153.1"/>
    <property type="match status" value="1"/>
</dbReference>
<dbReference type="PANTHER" id="PTHR21342:SF0">
    <property type="entry name" value="BIFUNCTIONAL NMN ADENYLYLTRANSFERASE_NUDIX HYDROLASE"/>
    <property type="match status" value="1"/>
</dbReference>
<dbReference type="PANTHER" id="PTHR21342">
    <property type="entry name" value="PHOSPHOPANTETHEINE ADENYLYLTRANSFERASE"/>
    <property type="match status" value="1"/>
</dbReference>
<dbReference type="Pfam" id="PF01467">
    <property type="entry name" value="CTP_transf_like"/>
    <property type="match status" value="1"/>
</dbReference>
<dbReference type="SUPFAM" id="SSF52374">
    <property type="entry name" value="Nucleotidylyl transferase"/>
    <property type="match status" value="1"/>
</dbReference>
<accession>Q6LWX6</accession>
<comment type="catalytic activity">
    <reaction evidence="1">
        <text>beta-nicotinamide D-ribonucleotide + ATP + H(+) = diphosphate + NAD(+)</text>
        <dbReference type="Rhea" id="RHEA:21360"/>
        <dbReference type="ChEBI" id="CHEBI:14649"/>
        <dbReference type="ChEBI" id="CHEBI:15378"/>
        <dbReference type="ChEBI" id="CHEBI:30616"/>
        <dbReference type="ChEBI" id="CHEBI:33019"/>
        <dbReference type="ChEBI" id="CHEBI:57540"/>
        <dbReference type="EC" id="2.7.7.1"/>
    </reaction>
</comment>
<comment type="pathway">
    <text evidence="1">Cofactor biosynthesis; NAD(+) biosynthesis; NAD(+) from nicotinamide D-ribonucleotide: step 1/1.</text>
</comment>
<comment type="subcellular location">
    <subcellularLocation>
        <location evidence="1">Cytoplasm</location>
    </subcellularLocation>
</comment>
<comment type="similarity">
    <text evidence="1">Belongs to the archaeal NMN adenylyltransferase family.</text>
</comment>
<name>NADM_METMP</name>
<feature type="chain" id="PRO_0000134994" description="Nicotinamide-nucleotide adenylyltransferase">
    <location>
        <begin position="1"/>
        <end position="171"/>
    </location>
</feature>
<protein>
    <recommendedName>
        <fullName evidence="1">Nicotinamide-nucleotide adenylyltransferase</fullName>
        <ecNumber evidence="1">2.7.7.1</ecNumber>
    </recommendedName>
    <alternativeName>
        <fullName evidence="1">NAD(+) diphosphorylase</fullName>
    </alternativeName>
    <alternativeName>
        <fullName evidence="1">NAD(+) pyrophosphorylase</fullName>
    </alternativeName>
    <alternativeName>
        <fullName evidence="1">NMN adenylyltransferase</fullName>
    </alternativeName>
</protein>
<gene>
    <name type="ordered locus">MMP1578</name>
</gene>
<keyword id="KW-0067">ATP-binding</keyword>
<keyword id="KW-0963">Cytoplasm</keyword>
<keyword id="KW-0520">NAD</keyword>
<keyword id="KW-0547">Nucleotide-binding</keyword>
<keyword id="KW-0548">Nucleotidyltransferase</keyword>
<keyword id="KW-0662">Pyridine nucleotide biosynthesis</keyword>
<keyword id="KW-1185">Reference proteome</keyword>
<keyword id="KW-0808">Transferase</keyword>
<reference key="1">
    <citation type="journal article" date="2004" name="J. Bacteriol.">
        <title>Complete genome sequence of the genetically tractable hydrogenotrophic methanogen Methanococcus maripaludis.</title>
        <authorList>
            <person name="Hendrickson E.L."/>
            <person name="Kaul R."/>
            <person name="Zhou Y."/>
            <person name="Bovee D."/>
            <person name="Chapman P."/>
            <person name="Chung J."/>
            <person name="Conway de Macario E."/>
            <person name="Dodsworth J.A."/>
            <person name="Gillett W."/>
            <person name="Graham D.E."/>
            <person name="Hackett M."/>
            <person name="Haydock A.K."/>
            <person name="Kang A."/>
            <person name="Land M.L."/>
            <person name="Levy R."/>
            <person name="Lie T.J."/>
            <person name="Major T.A."/>
            <person name="Moore B.C."/>
            <person name="Porat I."/>
            <person name="Palmeiri A."/>
            <person name="Rouse G."/>
            <person name="Saenphimmachak C."/>
            <person name="Soell D."/>
            <person name="Van Dien S."/>
            <person name="Wang T."/>
            <person name="Whitman W.B."/>
            <person name="Xia Q."/>
            <person name="Zhang Y."/>
            <person name="Larimer F.W."/>
            <person name="Olson M.V."/>
            <person name="Leigh J.A."/>
        </authorList>
    </citation>
    <scope>NUCLEOTIDE SEQUENCE [LARGE SCALE GENOMIC DNA]</scope>
    <source>
        <strain>DSM 14266 / JCM 13030 / NBRC 101832 / S2 / LL</strain>
    </source>
</reference>
<evidence type="ECO:0000255" key="1">
    <source>
        <dbReference type="HAMAP-Rule" id="MF_00243"/>
    </source>
</evidence>
<sequence>MRAFLIGRWQPFHKGHLEIIKKISAEVDEIIVGIGSCQKSHTLTDPFTAGERMMMITKTLENYDINYYAIPIIDIDYNAVWVSSVESLTPPFTTIYTGNSLVRELFSERNYVVKKPELYNRTDYSGTKIRKKMLEGSAWEHLVPEEVVKVIEEIDGINRIRRLSEKDYDEE</sequence>
<proteinExistence type="inferred from homology"/>